<organism>
    <name type="scientific">Escherichia coli O7:K1 (strain IAI39 / ExPEC)</name>
    <dbReference type="NCBI Taxonomy" id="585057"/>
    <lineage>
        <taxon>Bacteria</taxon>
        <taxon>Pseudomonadati</taxon>
        <taxon>Pseudomonadota</taxon>
        <taxon>Gammaproteobacteria</taxon>
        <taxon>Enterobacterales</taxon>
        <taxon>Enterobacteriaceae</taxon>
        <taxon>Escherichia</taxon>
    </lineage>
</organism>
<protein>
    <recommendedName>
        <fullName evidence="1">Small ribosomal subunit protein uS8</fullName>
    </recommendedName>
    <alternativeName>
        <fullName evidence="2">30S ribosomal protein S8</fullName>
    </alternativeName>
</protein>
<proteinExistence type="inferred from homology"/>
<dbReference type="EMBL" id="CU928164">
    <property type="protein sequence ID" value="CAR19914.1"/>
    <property type="molecule type" value="Genomic_DNA"/>
</dbReference>
<dbReference type="RefSeq" id="WP_000062611.1">
    <property type="nucleotide sequence ID" value="NC_011750.1"/>
</dbReference>
<dbReference type="RefSeq" id="YP_002409697.1">
    <property type="nucleotide sequence ID" value="NC_011750.1"/>
</dbReference>
<dbReference type="SMR" id="B7NLM5"/>
<dbReference type="STRING" id="585057.ECIAI39_3800"/>
<dbReference type="GeneID" id="93778681"/>
<dbReference type="KEGG" id="ect:ECIAI39_3800"/>
<dbReference type="PATRIC" id="fig|585057.6.peg.3937"/>
<dbReference type="HOGENOM" id="CLU_098428_0_0_6"/>
<dbReference type="Proteomes" id="UP000000749">
    <property type="component" value="Chromosome"/>
</dbReference>
<dbReference type="GO" id="GO:1990904">
    <property type="term" value="C:ribonucleoprotein complex"/>
    <property type="evidence" value="ECO:0007669"/>
    <property type="project" value="UniProtKB-KW"/>
</dbReference>
<dbReference type="GO" id="GO:0005840">
    <property type="term" value="C:ribosome"/>
    <property type="evidence" value="ECO:0007669"/>
    <property type="project" value="UniProtKB-KW"/>
</dbReference>
<dbReference type="GO" id="GO:0019843">
    <property type="term" value="F:rRNA binding"/>
    <property type="evidence" value="ECO:0007669"/>
    <property type="project" value="UniProtKB-UniRule"/>
</dbReference>
<dbReference type="GO" id="GO:0003735">
    <property type="term" value="F:structural constituent of ribosome"/>
    <property type="evidence" value="ECO:0007669"/>
    <property type="project" value="InterPro"/>
</dbReference>
<dbReference type="GO" id="GO:0006412">
    <property type="term" value="P:translation"/>
    <property type="evidence" value="ECO:0007669"/>
    <property type="project" value="UniProtKB-UniRule"/>
</dbReference>
<dbReference type="FunFam" id="3.30.1370.30:FF:000003">
    <property type="entry name" value="30S ribosomal protein S8"/>
    <property type="match status" value="1"/>
</dbReference>
<dbReference type="FunFam" id="3.30.1490.10:FF:000001">
    <property type="entry name" value="30S ribosomal protein S8"/>
    <property type="match status" value="1"/>
</dbReference>
<dbReference type="Gene3D" id="3.30.1370.30">
    <property type="match status" value="1"/>
</dbReference>
<dbReference type="Gene3D" id="3.30.1490.10">
    <property type="match status" value="1"/>
</dbReference>
<dbReference type="HAMAP" id="MF_01302_B">
    <property type="entry name" value="Ribosomal_uS8_B"/>
    <property type="match status" value="1"/>
</dbReference>
<dbReference type="InterPro" id="IPR000630">
    <property type="entry name" value="Ribosomal_uS8"/>
</dbReference>
<dbReference type="InterPro" id="IPR047863">
    <property type="entry name" value="Ribosomal_uS8_CS"/>
</dbReference>
<dbReference type="InterPro" id="IPR035987">
    <property type="entry name" value="Ribosomal_uS8_sf"/>
</dbReference>
<dbReference type="NCBIfam" id="NF001109">
    <property type="entry name" value="PRK00136.1"/>
    <property type="match status" value="1"/>
</dbReference>
<dbReference type="PANTHER" id="PTHR11758">
    <property type="entry name" value="40S RIBOSOMAL PROTEIN S15A"/>
    <property type="match status" value="1"/>
</dbReference>
<dbReference type="Pfam" id="PF00410">
    <property type="entry name" value="Ribosomal_S8"/>
    <property type="match status" value="1"/>
</dbReference>
<dbReference type="SUPFAM" id="SSF56047">
    <property type="entry name" value="Ribosomal protein S8"/>
    <property type="match status" value="1"/>
</dbReference>
<dbReference type="PROSITE" id="PS00053">
    <property type="entry name" value="RIBOSOMAL_S8"/>
    <property type="match status" value="1"/>
</dbReference>
<evidence type="ECO:0000255" key="1">
    <source>
        <dbReference type="HAMAP-Rule" id="MF_01302"/>
    </source>
</evidence>
<evidence type="ECO:0000305" key="2"/>
<accession>B7NLM5</accession>
<comment type="function">
    <text evidence="1">One of the primary rRNA binding proteins, it binds directly to 16S rRNA central domain where it helps coordinate assembly of the platform of the 30S subunit.</text>
</comment>
<comment type="subunit">
    <text evidence="1">Part of the 30S ribosomal subunit. Contacts proteins S5 and S12.</text>
</comment>
<comment type="similarity">
    <text evidence="1">Belongs to the universal ribosomal protein uS8 family.</text>
</comment>
<gene>
    <name evidence="1" type="primary">rpsH</name>
    <name type="ordered locus">ECIAI39_3800</name>
</gene>
<name>RS8_ECO7I</name>
<feature type="chain" id="PRO_1000140549" description="Small ribosomal subunit protein uS8">
    <location>
        <begin position="1"/>
        <end position="130"/>
    </location>
</feature>
<reference key="1">
    <citation type="journal article" date="2009" name="PLoS Genet.">
        <title>Organised genome dynamics in the Escherichia coli species results in highly diverse adaptive paths.</title>
        <authorList>
            <person name="Touchon M."/>
            <person name="Hoede C."/>
            <person name="Tenaillon O."/>
            <person name="Barbe V."/>
            <person name="Baeriswyl S."/>
            <person name="Bidet P."/>
            <person name="Bingen E."/>
            <person name="Bonacorsi S."/>
            <person name="Bouchier C."/>
            <person name="Bouvet O."/>
            <person name="Calteau A."/>
            <person name="Chiapello H."/>
            <person name="Clermont O."/>
            <person name="Cruveiller S."/>
            <person name="Danchin A."/>
            <person name="Diard M."/>
            <person name="Dossat C."/>
            <person name="Karoui M.E."/>
            <person name="Frapy E."/>
            <person name="Garry L."/>
            <person name="Ghigo J.M."/>
            <person name="Gilles A.M."/>
            <person name="Johnson J."/>
            <person name="Le Bouguenec C."/>
            <person name="Lescat M."/>
            <person name="Mangenot S."/>
            <person name="Martinez-Jehanne V."/>
            <person name="Matic I."/>
            <person name="Nassif X."/>
            <person name="Oztas S."/>
            <person name="Petit M.A."/>
            <person name="Pichon C."/>
            <person name="Rouy Z."/>
            <person name="Ruf C.S."/>
            <person name="Schneider D."/>
            <person name="Tourret J."/>
            <person name="Vacherie B."/>
            <person name="Vallenet D."/>
            <person name="Medigue C."/>
            <person name="Rocha E.P.C."/>
            <person name="Denamur E."/>
        </authorList>
    </citation>
    <scope>NUCLEOTIDE SEQUENCE [LARGE SCALE GENOMIC DNA]</scope>
    <source>
        <strain>IAI39 / ExPEC</strain>
    </source>
</reference>
<keyword id="KW-0687">Ribonucleoprotein</keyword>
<keyword id="KW-0689">Ribosomal protein</keyword>
<keyword id="KW-0694">RNA-binding</keyword>
<keyword id="KW-0699">rRNA-binding</keyword>
<sequence length="130" mass="14127">MSMQDPIADMLTRIRNGQAANKAAVTMPSSKLKVAIANVLKEEGFIEDFKVEGDTKPELELTLKYFQGKAVVESIQRVSRPGLRIYKRKDELPKVMAGLGIAVVSTSKGVMTDRAARQAGLGGEIICYVA</sequence>